<protein>
    <recommendedName>
        <fullName evidence="1">Ribosomal RNA large subunit methyltransferase H</fullName>
        <ecNumber evidence="1">2.1.1.177</ecNumber>
    </recommendedName>
    <alternativeName>
        <fullName evidence="1">23S rRNA (pseudouridine1915-N3)-methyltransferase</fullName>
    </alternativeName>
    <alternativeName>
        <fullName evidence="1">23S rRNA m3Psi1915 methyltransferase</fullName>
    </alternativeName>
    <alternativeName>
        <fullName evidence="1">rRNA (pseudouridine-N3-)-methyltransferase RlmH</fullName>
    </alternativeName>
</protein>
<proteinExistence type="inferred from homology"/>
<name>RLMH_EXISA</name>
<dbReference type="EC" id="2.1.1.177" evidence="1"/>
<dbReference type="EMBL" id="CP001615">
    <property type="protein sequence ID" value="ACQ70685.1"/>
    <property type="molecule type" value="Genomic_DNA"/>
</dbReference>
<dbReference type="RefSeq" id="WP_015880244.1">
    <property type="nucleotide sequence ID" value="NC_012673.1"/>
</dbReference>
<dbReference type="SMR" id="C4L022"/>
<dbReference type="STRING" id="360911.EAT1b_1759"/>
<dbReference type="KEGG" id="eat:EAT1b_1759"/>
<dbReference type="eggNOG" id="COG1576">
    <property type="taxonomic scope" value="Bacteria"/>
</dbReference>
<dbReference type="HOGENOM" id="CLU_100552_0_0_9"/>
<dbReference type="OrthoDB" id="9806643at2"/>
<dbReference type="Proteomes" id="UP000000716">
    <property type="component" value="Chromosome"/>
</dbReference>
<dbReference type="GO" id="GO:0005737">
    <property type="term" value="C:cytoplasm"/>
    <property type="evidence" value="ECO:0007669"/>
    <property type="project" value="UniProtKB-SubCell"/>
</dbReference>
<dbReference type="GO" id="GO:0070038">
    <property type="term" value="F:rRNA (pseudouridine-N3-)-methyltransferase activity"/>
    <property type="evidence" value="ECO:0007669"/>
    <property type="project" value="UniProtKB-UniRule"/>
</dbReference>
<dbReference type="CDD" id="cd18081">
    <property type="entry name" value="RlmH-like"/>
    <property type="match status" value="1"/>
</dbReference>
<dbReference type="Gene3D" id="3.40.1280.10">
    <property type="match status" value="1"/>
</dbReference>
<dbReference type="HAMAP" id="MF_00658">
    <property type="entry name" value="23SrRNA_methyltr_H"/>
    <property type="match status" value="1"/>
</dbReference>
<dbReference type="InterPro" id="IPR029028">
    <property type="entry name" value="Alpha/beta_knot_MTases"/>
</dbReference>
<dbReference type="InterPro" id="IPR003742">
    <property type="entry name" value="RlmH-like"/>
</dbReference>
<dbReference type="InterPro" id="IPR029026">
    <property type="entry name" value="tRNA_m1G_MTases_N"/>
</dbReference>
<dbReference type="NCBIfam" id="NF000985">
    <property type="entry name" value="PRK00103.1-3"/>
    <property type="match status" value="1"/>
</dbReference>
<dbReference type="NCBIfam" id="TIGR00246">
    <property type="entry name" value="tRNA_RlmH_YbeA"/>
    <property type="match status" value="1"/>
</dbReference>
<dbReference type="PANTHER" id="PTHR33603">
    <property type="entry name" value="METHYLTRANSFERASE"/>
    <property type="match status" value="1"/>
</dbReference>
<dbReference type="PANTHER" id="PTHR33603:SF1">
    <property type="entry name" value="RIBOSOMAL RNA LARGE SUBUNIT METHYLTRANSFERASE H"/>
    <property type="match status" value="1"/>
</dbReference>
<dbReference type="Pfam" id="PF02590">
    <property type="entry name" value="SPOUT_MTase"/>
    <property type="match status" value="1"/>
</dbReference>
<dbReference type="PIRSF" id="PIRSF004505">
    <property type="entry name" value="MT_bac"/>
    <property type="match status" value="1"/>
</dbReference>
<dbReference type="SUPFAM" id="SSF75217">
    <property type="entry name" value="alpha/beta knot"/>
    <property type="match status" value="1"/>
</dbReference>
<sequence>MNISIITVGKLKEKYLKQGIAEYTKRLSAYAKVQEIEVSDEKAPEHLSEADMLLVKQKEGERILAKISPDTHVIALAIKGKQRTSEEFARELDQLATYGKSKIAFVIGGSLGLSDDVMKRADDTISFSKMTFPHQLMKLVLCEQIYRAYRINRNEPYHK</sequence>
<feature type="chain" id="PRO_1000212453" description="Ribosomal RNA large subunit methyltransferase H">
    <location>
        <begin position="1"/>
        <end position="159"/>
    </location>
</feature>
<feature type="binding site" evidence="1">
    <location>
        <position position="76"/>
    </location>
    <ligand>
        <name>S-adenosyl-L-methionine</name>
        <dbReference type="ChEBI" id="CHEBI:59789"/>
    </ligand>
</feature>
<feature type="binding site" evidence="1">
    <location>
        <position position="108"/>
    </location>
    <ligand>
        <name>S-adenosyl-L-methionine</name>
        <dbReference type="ChEBI" id="CHEBI:59789"/>
    </ligand>
</feature>
<feature type="binding site" evidence="1">
    <location>
        <begin position="127"/>
        <end position="132"/>
    </location>
    <ligand>
        <name>S-adenosyl-L-methionine</name>
        <dbReference type="ChEBI" id="CHEBI:59789"/>
    </ligand>
</feature>
<organism>
    <name type="scientific">Exiguobacterium sp. (strain ATCC BAA-1283 / AT1b)</name>
    <dbReference type="NCBI Taxonomy" id="360911"/>
    <lineage>
        <taxon>Bacteria</taxon>
        <taxon>Bacillati</taxon>
        <taxon>Bacillota</taxon>
        <taxon>Bacilli</taxon>
        <taxon>Bacillales</taxon>
        <taxon>Bacillales Family XII. Incertae Sedis</taxon>
        <taxon>Exiguobacterium</taxon>
    </lineage>
</organism>
<accession>C4L022</accession>
<keyword id="KW-0963">Cytoplasm</keyword>
<keyword id="KW-0489">Methyltransferase</keyword>
<keyword id="KW-0698">rRNA processing</keyword>
<keyword id="KW-0949">S-adenosyl-L-methionine</keyword>
<keyword id="KW-0808">Transferase</keyword>
<comment type="function">
    <text evidence="1">Specifically methylates the pseudouridine at position 1915 (m3Psi1915) in 23S rRNA.</text>
</comment>
<comment type="catalytic activity">
    <reaction evidence="1">
        <text>pseudouridine(1915) in 23S rRNA + S-adenosyl-L-methionine = N(3)-methylpseudouridine(1915) in 23S rRNA + S-adenosyl-L-homocysteine + H(+)</text>
        <dbReference type="Rhea" id="RHEA:42752"/>
        <dbReference type="Rhea" id="RHEA-COMP:10221"/>
        <dbReference type="Rhea" id="RHEA-COMP:10222"/>
        <dbReference type="ChEBI" id="CHEBI:15378"/>
        <dbReference type="ChEBI" id="CHEBI:57856"/>
        <dbReference type="ChEBI" id="CHEBI:59789"/>
        <dbReference type="ChEBI" id="CHEBI:65314"/>
        <dbReference type="ChEBI" id="CHEBI:74486"/>
        <dbReference type="EC" id="2.1.1.177"/>
    </reaction>
</comment>
<comment type="subunit">
    <text evidence="1">Homodimer.</text>
</comment>
<comment type="subcellular location">
    <subcellularLocation>
        <location evidence="1">Cytoplasm</location>
    </subcellularLocation>
</comment>
<comment type="similarity">
    <text evidence="1">Belongs to the RNA methyltransferase RlmH family.</text>
</comment>
<gene>
    <name evidence="1" type="primary">rlmH</name>
    <name type="ordered locus">EAT1b_1759</name>
</gene>
<reference key="1">
    <citation type="journal article" date="2011" name="J. Bacteriol.">
        <title>Complete genome sequence of the Thermophilic Bacterium Exiguobacterium sp. AT1b.</title>
        <authorList>
            <person name="Vishnivetskaya T.A."/>
            <person name="Lucas S."/>
            <person name="Copeland A."/>
            <person name="Lapidus A."/>
            <person name="Glavina del Rio T."/>
            <person name="Dalin E."/>
            <person name="Tice H."/>
            <person name="Bruce D.C."/>
            <person name="Goodwin L.A."/>
            <person name="Pitluck S."/>
            <person name="Saunders E."/>
            <person name="Brettin T."/>
            <person name="Detter C."/>
            <person name="Han C."/>
            <person name="Larimer F."/>
            <person name="Land M.L."/>
            <person name="Hauser L.J."/>
            <person name="Kyrpides N.C."/>
            <person name="Ovchinnikova G."/>
            <person name="Kathariou S."/>
            <person name="Ramaley R.F."/>
            <person name="Rodrigues D.F."/>
            <person name="Hendrix C."/>
            <person name="Richardson P."/>
            <person name="Tiedje J.M."/>
        </authorList>
    </citation>
    <scope>NUCLEOTIDE SEQUENCE [LARGE SCALE GENOMIC DNA]</scope>
    <source>
        <strain>ATCC BAA-1283 / AT1b</strain>
    </source>
</reference>
<evidence type="ECO:0000255" key="1">
    <source>
        <dbReference type="HAMAP-Rule" id="MF_00658"/>
    </source>
</evidence>